<organism>
    <name type="scientific">Schizosaccharomyces pombe (strain 972 / ATCC 24843)</name>
    <name type="common">Fission yeast</name>
    <dbReference type="NCBI Taxonomy" id="284812"/>
    <lineage>
        <taxon>Eukaryota</taxon>
        <taxon>Fungi</taxon>
        <taxon>Dikarya</taxon>
        <taxon>Ascomycota</taxon>
        <taxon>Taphrinomycotina</taxon>
        <taxon>Schizosaccharomycetes</taxon>
        <taxon>Schizosaccharomycetales</taxon>
        <taxon>Schizosaccharomycetaceae</taxon>
        <taxon>Schizosaccharomyces</taxon>
    </lineage>
</organism>
<gene>
    <name type="ORF">SPBC119.16c</name>
</gene>
<keyword id="KW-0256">Endoplasmic reticulum</keyword>
<keyword id="KW-0333">Golgi apparatus</keyword>
<keyword id="KW-0472">Membrane</keyword>
<keyword id="KW-1185">Reference proteome</keyword>
<keyword id="KW-0812">Transmembrane</keyword>
<keyword id="KW-1133">Transmembrane helix</keyword>
<protein>
    <recommendedName>
        <fullName>Uncharacterized protein C119.16c</fullName>
    </recommendedName>
</protein>
<sequence length="448" mass="51190">MSIQAIVLATFDAKEGYNVENYYPGDFNVEGIEYLLFPSGIQELDNCTIFFRFQDQLCLSVFSKLQHPSFERSAFFTSVGLILSDDINFGEAVVKYGETLLYIANGLSLATLKYKFGEDASETYASEKCTSHQLSDSDFFKSLQTSAVNLEFDSLFEKLQGNKFAILGANSKELSQSYATILLDHLGPAFYCLYKFALQRKRILLISSHDDQLYSIIDMIVRLSSIKRSSDASIPILLSDLHPFYSVGLANTSTLLDNDLEEGWIACTTDTVLLSKSSLYDLALYWPDNSFNANKYPQIFNSNSIRIKPSYDDLINFKGLSRYLSFDGESSWGLTTYSLASKYIFNTSHHNLTDQEFLNENMLDYFQRYNQKLLTVLSSNAESFNVSDMQTLGLNPCHSLDKSFVSEISQIWLKKHINWQYGKYFWLRRVSLIFLASTCFLFILWKLL</sequence>
<evidence type="ECO:0000255" key="1"/>
<evidence type="ECO:0000255" key="2">
    <source>
        <dbReference type="PROSITE-ProRule" id="PRU00304"/>
    </source>
</evidence>
<evidence type="ECO:0000269" key="3">
    <source>
    </source>
</evidence>
<reference key="1">
    <citation type="journal article" date="2002" name="Nature">
        <title>The genome sequence of Schizosaccharomyces pombe.</title>
        <authorList>
            <person name="Wood V."/>
            <person name="Gwilliam R."/>
            <person name="Rajandream M.A."/>
            <person name="Lyne M.H."/>
            <person name="Lyne R."/>
            <person name="Stewart A."/>
            <person name="Sgouros J.G."/>
            <person name="Peat N."/>
            <person name="Hayles J."/>
            <person name="Baker S.G."/>
            <person name="Basham D."/>
            <person name="Bowman S."/>
            <person name="Brooks K."/>
            <person name="Brown D."/>
            <person name="Brown S."/>
            <person name="Chillingworth T."/>
            <person name="Churcher C.M."/>
            <person name="Collins M."/>
            <person name="Connor R."/>
            <person name="Cronin A."/>
            <person name="Davis P."/>
            <person name="Feltwell T."/>
            <person name="Fraser A."/>
            <person name="Gentles S."/>
            <person name="Goble A."/>
            <person name="Hamlin N."/>
            <person name="Harris D.E."/>
            <person name="Hidalgo J."/>
            <person name="Hodgson G."/>
            <person name="Holroyd S."/>
            <person name="Hornsby T."/>
            <person name="Howarth S."/>
            <person name="Huckle E.J."/>
            <person name="Hunt S."/>
            <person name="Jagels K."/>
            <person name="James K.D."/>
            <person name="Jones L."/>
            <person name="Jones M."/>
            <person name="Leather S."/>
            <person name="McDonald S."/>
            <person name="McLean J."/>
            <person name="Mooney P."/>
            <person name="Moule S."/>
            <person name="Mungall K.L."/>
            <person name="Murphy L.D."/>
            <person name="Niblett D."/>
            <person name="Odell C."/>
            <person name="Oliver K."/>
            <person name="O'Neil S."/>
            <person name="Pearson D."/>
            <person name="Quail M.A."/>
            <person name="Rabbinowitsch E."/>
            <person name="Rutherford K.M."/>
            <person name="Rutter S."/>
            <person name="Saunders D."/>
            <person name="Seeger K."/>
            <person name="Sharp S."/>
            <person name="Skelton J."/>
            <person name="Simmonds M.N."/>
            <person name="Squares R."/>
            <person name="Squares S."/>
            <person name="Stevens K."/>
            <person name="Taylor K."/>
            <person name="Taylor R.G."/>
            <person name="Tivey A."/>
            <person name="Walsh S.V."/>
            <person name="Warren T."/>
            <person name="Whitehead S."/>
            <person name="Woodward J.R."/>
            <person name="Volckaert G."/>
            <person name="Aert R."/>
            <person name="Robben J."/>
            <person name="Grymonprez B."/>
            <person name="Weltjens I."/>
            <person name="Vanstreels E."/>
            <person name="Rieger M."/>
            <person name="Schaefer M."/>
            <person name="Mueller-Auer S."/>
            <person name="Gabel C."/>
            <person name="Fuchs M."/>
            <person name="Duesterhoeft A."/>
            <person name="Fritzc C."/>
            <person name="Holzer E."/>
            <person name="Moestl D."/>
            <person name="Hilbert H."/>
            <person name="Borzym K."/>
            <person name="Langer I."/>
            <person name="Beck A."/>
            <person name="Lehrach H."/>
            <person name="Reinhardt R."/>
            <person name="Pohl T.M."/>
            <person name="Eger P."/>
            <person name="Zimmermann W."/>
            <person name="Wedler H."/>
            <person name="Wambutt R."/>
            <person name="Purnelle B."/>
            <person name="Goffeau A."/>
            <person name="Cadieu E."/>
            <person name="Dreano S."/>
            <person name="Gloux S."/>
            <person name="Lelaure V."/>
            <person name="Mottier S."/>
            <person name="Galibert F."/>
            <person name="Aves S.J."/>
            <person name="Xiang Z."/>
            <person name="Hunt C."/>
            <person name="Moore K."/>
            <person name="Hurst S.M."/>
            <person name="Lucas M."/>
            <person name="Rochet M."/>
            <person name="Gaillardin C."/>
            <person name="Tallada V.A."/>
            <person name="Garzon A."/>
            <person name="Thode G."/>
            <person name="Daga R.R."/>
            <person name="Cruzado L."/>
            <person name="Jimenez J."/>
            <person name="Sanchez M."/>
            <person name="del Rey F."/>
            <person name="Benito J."/>
            <person name="Dominguez A."/>
            <person name="Revuelta J.L."/>
            <person name="Moreno S."/>
            <person name="Armstrong J."/>
            <person name="Forsburg S.L."/>
            <person name="Cerutti L."/>
            <person name="Lowe T."/>
            <person name="McCombie W.R."/>
            <person name="Paulsen I."/>
            <person name="Potashkin J."/>
            <person name="Shpakovski G.V."/>
            <person name="Ussery D."/>
            <person name="Barrell B.G."/>
            <person name="Nurse P."/>
        </authorList>
    </citation>
    <scope>NUCLEOTIDE SEQUENCE [LARGE SCALE GENOMIC DNA]</scope>
    <source>
        <strain>972 / ATCC 24843</strain>
    </source>
</reference>
<reference key="2">
    <citation type="journal article" date="2006" name="Nat. Biotechnol.">
        <title>ORFeome cloning and global analysis of protein localization in the fission yeast Schizosaccharomyces pombe.</title>
        <authorList>
            <person name="Matsuyama A."/>
            <person name="Arai R."/>
            <person name="Yashiroda Y."/>
            <person name="Shirai A."/>
            <person name="Kamata A."/>
            <person name="Sekido S."/>
            <person name="Kobayashi Y."/>
            <person name="Hashimoto A."/>
            <person name="Hamamoto M."/>
            <person name="Hiraoka Y."/>
            <person name="Horinouchi S."/>
            <person name="Yoshida M."/>
        </authorList>
    </citation>
    <scope>SUBCELLULAR LOCATION [LARGE SCALE ANALYSIS]</scope>
</reference>
<comment type="subcellular location">
    <subcellularLocation>
        <location evidence="3">Golgi apparatus membrane</location>
        <topology evidence="3">Single-pass membrane protein</topology>
    </subcellularLocation>
    <subcellularLocation>
        <location evidence="3">Endoplasmic reticulum membrane</location>
        <topology evidence="3">Single-pass membrane protein</topology>
    </subcellularLocation>
</comment>
<proteinExistence type="predicted"/>
<feature type="chain" id="PRO_0000372350" description="Uncharacterized protein C119.16c">
    <location>
        <begin position="1"/>
        <end position="448"/>
    </location>
</feature>
<feature type="transmembrane region" description="Helical" evidence="1">
    <location>
        <begin position="425"/>
        <end position="447"/>
    </location>
</feature>
<feature type="domain" description="uDENN" evidence="2">
    <location>
        <begin position="4"/>
        <end position="155"/>
    </location>
</feature>
<feature type="domain" description="cDENN" evidence="2">
    <location>
        <begin position="183"/>
        <end position="326"/>
    </location>
</feature>
<feature type="domain" description="dDENN" evidence="2">
    <location>
        <begin position="328"/>
        <end position="428"/>
    </location>
</feature>
<name>YBAG_SCHPO</name>
<accession>O42907</accession>
<dbReference type="EMBL" id="CU329671">
    <property type="protein sequence ID" value="CAA17931.1"/>
    <property type="molecule type" value="Genomic_DNA"/>
</dbReference>
<dbReference type="PIR" id="T39314">
    <property type="entry name" value="T39314"/>
</dbReference>
<dbReference type="RefSeq" id="NP_595298.1">
    <property type="nucleotide sequence ID" value="NM_001021205.2"/>
</dbReference>
<dbReference type="BioGRID" id="276499">
    <property type="interactions" value="4"/>
</dbReference>
<dbReference type="FunCoup" id="O42907">
    <property type="interactions" value="20"/>
</dbReference>
<dbReference type="STRING" id="284812.O42907"/>
<dbReference type="PaxDb" id="4896-SPBC119.16c.1"/>
<dbReference type="EnsemblFungi" id="SPBC119.16c.1">
    <property type="protein sequence ID" value="SPBC119.16c.1:pep"/>
    <property type="gene ID" value="SPBC119.16c"/>
</dbReference>
<dbReference type="KEGG" id="spo:2539955"/>
<dbReference type="PomBase" id="SPBC119.16c"/>
<dbReference type="VEuPathDB" id="FungiDB:SPBC119.16c"/>
<dbReference type="eggNOG" id="KOG4704">
    <property type="taxonomic scope" value="Eukaryota"/>
</dbReference>
<dbReference type="HOGENOM" id="CLU_611333_0_0_1"/>
<dbReference type="InParanoid" id="O42907"/>
<dbReference type="OMA" id="YERNAYF"/>
<dbReference type="PhylomeDB" id="O42907"/>
<dbReference type="PRO" id="PR:O42907"/>
<dbReference type="Proteomes" id="UP000002485">
    <property type="component" value="Chromosome II"/>
</dbReference>
<dbReference type="GO" id="GO:0005737">
    <property type="term" value="C:cytoplasm"/>
    <property type="evidence" value="ECO:0007005"/>
    <property type="project" value="PomBase"/>
</dbReference>
<dbReference type="GO" id="GO:0005783">
    <property type="term" value="C:endoplasmic reticulum"/>
    <property type="evidence" value="ECO:0007005"/>
    <property type="project" value="PomBase"/>
</dbReference>
<dbReference type="GO" id="GO:0005789">
    <property type="term" value="C:endoplasmic reticulum membrane"/>
    <property type="evidence" value="ECO:0007669"/>
    <property type="project" value="UniProtKB-SubCell"/>
</dbReference>
<dbReference type="GO" id="GO:0005794">
    <property type="term" value="C:Golgi apparatus"/>
    <property type="evidence" value="ECO:0007005"/>
    <property type="project" value="PomBase"/>
</dbReference>
<dbReference type="GO" id="GO:0000139">
    <property type="term" value="C:Golgi membrane"/>
    <property type="evidence" value="ECO:0007669"/>
    <property type="project" value="UniProtKB-SubCell"/>
</dbReference>
<dbReference type="GO" id="GO:0005811">
    <property type="term" value="C:lipid droplet"/>
    <property type="evidence" value="ECO:0000318"/>
    <property type="project" value="GO_Central"/>
</dbReference>
<dbReference type="InterPro" id="IPR018626">
    <property type="entry name" value="LCHN/Anr2"/>
</dbReference>
<dbReference type="InterPro" id="IPR053056">
    <property type="entry name" value="Lipid_Metab_Assoc_Protein"/>
</dbReference>
<dbReference type="InterPro" id="IPR037516">
    <property type="entry name" value="Tripartite_DENN"/>
</dbReference>
<dbReference type="PANTHER" id="PTHR28153:SF1">
    <property type="entry name" value="DUF4484 DOMAIN-CONTAINING PROTEIN"/>
    <property type="match status" value="1"/>
</dbReference>
<dbReference type="PANTHER" id="PTHR28153">
    <property type="entry name" value="PROTEIN, PUTATIVE-RELATED"/>
    <property type="match status" value="1"/>
</dbReference>
<dbReference type="Pfam" id="PF09804">
    <property type="entry name" value="DENND11"/>
    <property type="match status" value="1"/>
</dbReference>
<dbReference type="PROSITE" id="PS50211">
    <property type="entry name" value="DENN"/>
    <property type="match status" value="1"/>
</dbReference>